<gene>
    <name evidence="1" type="primary">INHCA</name>
    <name evidence="6" type="synonym">ICA</name>
</gene>
<proteinExistence type="evidence at protein level"/>
<sequence length="704" mass="77634">MRLAFCVLLCAGSLGLCLAFPKETVRWCTVSSQEASKCSSFRHNMKKILPVEGPHVSCVKRTSYLECIRAILANEADAVTIDGGLVFEAGLAPYNLKPVVAEFYGSKDDPQTHYYAVAVVKKGSDFQLSQLRGKKSCHTGLGWSAGWNIPMGILLPPDSGEEAAAKFFSSSCVPCADRMAFPKMCQLCAGKGVEKCACSNHERYFGYSGAFKCLQEDVGDVAFVRHVTVFENLPDKADRDQYELLCKDNTRRPVDDYENCYLAQVPSHAVVARSVDGKEDLIWELLNQAQENFGKDKSAEFQLFSSSHGKDLLFTDACLGFLRVPPKMDAKLYLGYEYFAAIQHLRRVQGTEEPQRVMWCAVGQHERTKCDSWSVLSGGILNCNSEDTMEDCIAAIAKGEADAMSLDGGFLYTAGKCGLVPVLAENYLSQDGKERFGSKCVNTPVEGYYVVAVVKKSDADLTWNSLRGKKSCHIAVGTSAGWIIPMGFIYNQTGSCKLDEFFSQSCAPGSDPESRLCALCSGSISGQPAHTCAPNSHEGYHGFSGALRCLVEKGDVAFVKHPTVLQNTDGRNPEAWAKDLKQEDFQLLCPDGTRKPVTEAQSCHLAAVPSHAVVSRKDKADFVRRMLFNQQELFGRNGFEYMMFQLFKSSTEDLLFSDDTECLANLQDKITYQKYLGPEYLQAIANVRQCFPSELLDACTFHGN</sequence>
<reference key="1">
    <citation type="journal article" date="1997" name="Biochemistry">
        <title>Cloning, sequencing, and recombinant expression of the porcine inhibitor of carbonic anhydrase: a novel member of the transferrin family.</title>
        <authorList>
            <person name="Wuebbens M.W."/>
            <person name="Roush E.D."/>
            <person name="Decastro C.M."/>
            <person name="Fierke C.A."/>
        </authorList>
    </citation>
    <scope>NUCLEOTIDE SEQUENCE [MRNA]</scope>
    <scope>PARTIAL PROTEIN SEQUENCE</scope>
</reference>
<reference key="2">
    <citation type="journal article" date="1992" name="Biochemistry">
        <title>Purification and characterization of a carbonic anhydrase II inhibitor from porcine plasma.</title>
        <authorList>
            <person name="Roush E.D."/>
            <person name="Fierke C.A."/>
        </authorList>
    </citation>
    <scope>FUNCTION</scope>
    <scope>SUBUNIT</scope>
    <scope>TISSUE SPECIFICITY</scope>
    <scope>GLYCOSYLATION</scope>
</reference>
<reference key="3">
    <citation type="journal article" date="2008" name="Biochemistry">
        <title>Evolution reversed: the ability to bind iron restored to the N-lobe of the murine inhibitor of carbonic anhydrase by strategic mutagenesis.</title>
        <authorList>
            <person name="Mason A.B."/>
            <person name="Judson G.L."/>
            <person name="Bravo M.C."/>
            <person name="Edelstein A."/>
            <person name="Byrne S.L."/>
            <person name="James N.G."/>
            <person name="Roush E.D."/>
            <person name="Fierke C.A."/>
            <person name="Bobst C.E."/>
            <person name="Kaltashov I.A."/>
            <person name="Daughtery M.A."/>
        </authorList>
    </citation>
    <scope>FUNCTION</scope>
</reference>
<keyword id="KW-0903">Direct protein sequencing</keyword>
<keyword id="KW-1015">Disulfide bond</keyword>
<keyword id="KW-0325">Glycoprotein</keyword>
<keyword id="KW-1185">Reference proteome</keyword>
<keyword id="KW-0677">Repeat</keyword>
<keyword id="KW-0964">Secreted</keyword>
<keyword id="KW-0732">Signal</keyword>
<feature type="signal peptide" evidence="2">
    <location>
        <begin position="1"/>
        <end position="19"/>
    </location>
</feature>
<feature type="chain" id="PRO_0000035745" description="Inhibitor of carbonic anhydrase">
    <location>
        <begin position="20"/>
        <end position="704"/>
    </location>
</feature>
<feature type="domain" description="Transferrin-like 1" evidence="3">
    <location>
        <begin position="25"/>
        <end position="347"/>
    </location>
</feature>
<feature type="domain" description="Transferrin-like 2" evidence="3">
    <location>
        <begin position="357"/>
        <end position="689"/>
    </location>
</feature>
<feature type="glycosylation site" description="N-linked (GlcNAc...) asparagine" evidence="2">
    <location>
        <position position="491"/>
    </location>
</feature>
<feature type="disulfide bond" evidence="3">
    <location>
        <begin position="28"/>
        <end position="67"/>
    </location>
</feature>
<feature type="disulfide bond" evidence="3">
    <location>
        <begin position="38"/>
        <end position="58"/>
    </location>
</feature>
<feature type="disulfide bond" evidence="3">
    <location>
        <begin position="137"/>
        <end position="213"/>
    </location>
</feature>
<feature type="disulfide bond" evidence="3">
    <location>
        <begin position="172"/>
        <end position="188"/>
    </location>
</feature>
<feature type="disulfide bond" evidence="3">
    <location>
        <begin position="175"/>
        <end position="196"/>
    </location>
</feature>
<feature type="disulfide bond" evidence="3">
    <location>
        <begin position="185"/>
        <end position="198"/>
    </location>
</feature>
<feature type="disulfide bond" evidence="3">
    <location>
        <begin position="246"/>
        <end position="260"/>
    </location>
</feature>
<feature type="disulfide bond" evidence="3">
    <location>
        <begin position="360"/>
        <end position="392"/>
    </location>
</feature>
<feature type="disulfide bond" evidence="3">
    <location>
        <begin position="370"/>
        <end position="383"/>
    </location>
</feature>
<feature type="disulfide bond" evidence="3">
    <location>
        <begin position="417"/>
        <end position="699"/>
    </location>
</feature>
<feature type="disulfide bond" evidence="3">
    <location>
        <begin position="440"/>
        <end position="662"/>
    </location>
</feature>
<feature type="disulfide bond" evidence="3">
    <location>
        <begin position="472"/>
        <end position="549"/>
    </location>
</feature>
<feature type="disulfide bond" evidence="3">
    <location>
        <begin position="496"/>
        <end position="690"/>
    </location>
</feature>
<feature type="disulfide bond" evidence="3">
    <location>
        <begin position="506"/>
        <end position="520"/>
    </location>
</feature>
<feature type="disulfide bond" evidence="3">
    <location>
        <begin position="517"/>
        <end position="532"/>
    </location>
</feature>
<feature type="disulfide bond" evidence="3">
    <location>
        <begin position="589"/>
        <end position="603"/>
    </location>
</feature>
<accession>Q29545</accession>
<dbReference type="EMBL" id="U36916">
    <property type="protein sequence ID" value="AAB58956.1"/>
    <property type="molecule type" value="mRNA"/>
</dbReference>
<dbReference type="PIR" id="I47228">
    <property type="entry name" value="I47228"/>
</dbReference>
<dbReference type="RefSeq" id="NP_999012.1">
    <property type="nucleotide sequence ID" value="NM_213847.1"/>
</dbReference>
<dbReference type="SMR" id="Q29545"/>
<dbReference type="FunCoup" id="Q29545">
    <property type="interactions" value="171"/>
</dbReference>
<dbReference type="STRING" id="9823.ENSSSCP00000067763"/>
<dbReference type="MEROPS" id="S60.979"/>
<dbReference type="GlyCosmos" id="Q29545">
    <property type="glycosylation" value="1 site, No reported glycans"/>
</dbReference>
<dbReference type="GlyGen" id="Q29545">
    <property type="glycosylation" value="1 site"/>
</dbReference>
<dbReference type="PaxDb" id="9823-ENSSSCP00000021371"/>
<dbReference type="PeptideAtlas" id="Q29545"/>
<dbReference type="GeneID" id="396845"/>
<dbReference type="KEGG" id="ssc:396845"/>
<dbReference type="CTD" id="71775"/>
<dbReference type="eggNOG" id="ENOG502QT0C">
    <property type="taxonomic scope" value="Eukaryota"/>
</dbReference>
<dbReference type="InParanoid" id="Q29545"/>
<dbReference type="OrthoDB" id="9981115at2759"/>
<dbReference type="Proteomes" id="UP000008227">
    <property type="component" value="Unplaced"/>
</dbReference>
<dbReference type="Proteomes" id="UP000314985">
    <property type="component" value="Unplaced"/>
</dbReference>
<dbReference type="Proteomes" id="UP000694570">
    <property type="component" value="Unplaced"/>
</dbReference>
<dbReference type="Proteomes" id="UP000694571">
    <property type="component" value="Unplaced"/>
</dbReference>
<dbReference type="Proteomes" id="UP000694720">
    <property type="component" value="Unplaced"/>
</dbReference>
<dbReference type="Proteomes" id="UP000694722">
    <property type="component" value="Unplaced"/>
</dbReference>
<dbReference type="Proteomes" id="UP000694723">
    <property type="component" value="Unplaced"/>
</dbReference>
<dbReference type="Proteomes" id="UP000694724">
    <property type="component" value="Unplaced"/>
</dbReference>
<dbReference type="Proteomes" id="UP000694725">
    <property type="component" value="Unplaced"/>
</dbReference>
<dbReference type="Proteomes" id="UP000694726">
    <property type="component" value="Unplaced"/>
</dbReference>
<dbReference type="Proteomes" id="UP000694727">
    <property type="component" value="Unplaced"/>
</dbReference>
<dbReference type="Proteomes" id="UP000694728">
    <property type="component" value="Unplaced"/>
</dbReference>
<dbReference type="GO" id="GO:0005769">
    <property type="term" value="C:early endosome"/>
    <property type="evidence" value="ECO:0000318"/>
    <property type="project" value="GO_Central"/>
</dbReference>
<dbReference type="GO" id="GO:0005615">
    <property type="term" value="C:extracellular space"/>
    <property type="evidence" value="ECO:0000318"/>
    <property type="project" value="GO_Central"/>
</dbReference>
<dbReference type="GO" id="GO:0005886">
    <property type="term" value="C:plasma membrane"/>
    <property type="evidence" value="ECO:0000318"/>
    <property type="project" value="GO_Central"/>
</dbReference>
<dbReference type="GO" id="GO:0055037">
    <property type="term" value="C:recycling endosome"/>
    <property type="evidence" value="ECO:0000318"/>
    <property type="project" value="GO_Central"/>
</dbReference>
<dbReference type="GO" id="GO:0019731">
    <property type="term" value="P:antibacterial humoral response"/>
    <property type="evidence" value="ECO:0000318"/>
    <property type="project" value="GO_Central"/>
</dbReference>
<dbReference type="GO" id="GO:0006826">
    <property type="term" value="P:iron ion transport"/>
    <property type="evidence" value="ECO:0000318"/>
    <property type="project" value="GO_Central"/>
</dbReference>
<dbReference type="CDD" id="cd13617">
    <property type="entry name" value="PBP2_transferrin_C"/>
    <property type="match status" value="1"/>
</dbReference>
<dbReference type="CDD" id="cd13618">
    <property type="entry name" value="PBP2_transferrin_N"/>
    <property type="match status" value="1"/>
</dbReference>
<dbReference type="FunFam" id="3.40.190.10:FF:000095">
    <property type="entry name" value="Lactotransferrin"/>
    <property type="match status" value="1"/>
</dbReference>
<dbReference type="FunFam" id="3.40.190.10:FF:000105">
    <property type="entry name" value="Serotransferrin"/>
    <property type="match status" value="1"/>
</dbReference>
<dbReference type="Gene3D" id="3.40.190.10">
    <property type="entry name" value="Periplasmic binding protein-like II"/>
    <property type="match status" value="4"/>
</dbReference>
<dbReference type="InterPro" id="IPR016357">
    <property type="entry name" value="Transferrin"/>
</dbReference>
<dbReference type="InterPro" id="IPR001156">
    <property type="entry name" value="Transferrin-like_dom"/>
</dbReference>
<dbReference type="InterPro" id="IPR018195">
    <property type="entry name" value="Transferrin_Fe_BS"/>
</dbReference>
<dbReference type="PANTHER" id="PTHR11485:SF20">
    <property type="entry name" value="INHIBITOR OF CARBONIC ANHYDRASE"/>
    <property type="match status" value="1"/>
</dbReference>
<dbReference type="PANTHER" id="PTHR11485">
    <property type="entry name" value="TRANSFERRIN"/>
    <property type="match status" value="1"/>
</dbReference>
<dbReference type="Pfam" id="PF00405">
    <property type="entry name" value="Transferrin"/>
    <property type="match status" value="2"/>
</dbReference>
<dbReference type="PIRSF" id="PIRSF002549">
    <property type="entry name" value="Transferrin"/>
    <property type="match status" value="1"/>
</dbReference>
<dbReference type="PRINTS" id="PR00422">
    <property type="entry name" value="TRANSFERRIN"/>
</dbReference>
<dbReference type="SMART" id="SM00094">
    <property type="entry name" value="TR_FER"/>
    <property type="match status" value="2"/>
</dbReference>
<dbReference type="SUPFAM" id="SSF53850">
    <property type="entry name" value="Periplasmic binding protein-like II"/>
    <property type="match status" value="2"/>
</dbReference>
<dbReference type="PROSITE" id="PS00205">
    <property type="entry name" value="TRANSFERRIN_LIKE_1"/>
    <property type="match status" value="2"/>
</dbReference>
<dbReference type="PROSITE" id="PS00206">
    <property type="entry name" value="TRANSFERRIN_LIKE_2"/>
    <property type="match status" value="1"/>
</dbReference>
<dbReference type="PROSITE" id="PS00207">
    <property type="entry name" value="TRANSFERRIN_LIKE_3"/>
    <property type="match status" value="2"/>
</dbReference>
<dbReference type="PROSITE" id="PS51408">
    <property type="entry name" value="TRANSFERRIN_LIKE_4"/>
    <property type="match status" value="2"/>
</dbReference>
<evidence type="ECO:0000250" key="1">
    <source>
        <dbReference type="UniProtKB" id="Q9DBD0"/>
    </source>
</evidence>
<evidence type="ECO:0000255" key="2"/>
<evidence type="ECO:0000255" key="3">
    <source>
        <dbReference type="PROSITE-ProRule" id="PRU00741"/>
    </source>
</evidence>
<evidence type="ECO:0000269" key="4">
    <source>
    </source>
</evidence>
<evidence type="ECO:0000269" key="5">
    <source>
    </source>
</evidence>
<evidence type="ECO:0000303" key="6">
    <source>
    </source>
</evidence>
<comment type="function">
    <text evidence="1 4 5">Inhibitor for carbonic anhydrase 2 (CA2) (PubMed:1463741, PubMed:18712936). Does not bind iron ions (By similarity).</text>
</comment>
<comment type="subunit">
    <text evidence="1 4">Monomer (PubMed:1463741). Interacts (via transferrin-like domain 2) with CA2 (By similarity).</text>
</comment>
<comment type="subcellular location">
    <subcellularLocation>
        <location evidence="1">Secreted</location>
    </subcellularLocation>
</comment>
<comment type="tissue specificity">
    <text evidence="4">Blood plasma (at protein level).</text>
</comment>
<comment type="PTM">
    <text evidence="4">N-glycosylated.</text>
</comment>
<comment type="similarity">
    <text evidence="3">Belongs to the transferrin family.</text>
</comment>
<protein>
    <recommendedName>
        <fullName evidence="1">Inhibitor of carbonic anhydrase</fullName>
    </recommendedName>
</protein>
<name>ICA_PIG</name>
<organism>
    <name type="scientific">Sus scrofa</name>
    <name type="common">Pig</name>
    <dbReference type="NCBI Taxonomy" id="9823"/>
    <lineage>
        <taxon>Eukaryota</taxon>
        <taxon>Metazoa</taxon>
        <taxon>Chordata</taxon>
        <taxon>Craniata</taxon>
        <taxon>Vertebrata</taxon>
        <taxon>Euteleostomi</taxon>
        <taxon>Mammalia</taxon>
        <taxon>Eutheria</taxon>
        <taxon>Laurasiatheria</taxon>
        <taxon>Artiodactyla</taxon>
        <taxon>Suina</taxon>
        <taxon>Suidae</taxon>
        <taxon>Sus</taxon>
    </lineage>
</organism>